<sequence length="265" mass="29784">MMDSMIIGKYVPGTSLVHRLDPRTKLITIFLFVCIVFLANNVQTYALLGLFTIGVVSLTRVPFSFLMKGLKPIIWIVLFTFLLHILMTHEGPIIFQIGFFKVYEGGLVQGIFISLRFVYLILITTLLTLTTTPIEITDGMEQLLNPLKKLKLPVHELALMMSISLRFIPTLMEETDKIMKAQMARGVDFTSGPVKERVKAIVPLLVPLFVSAFKRAEELAVAMEARGYQGGEGRTKYRKLVWTGKDTSVIVSLIVLAALLFFLRA</sequence>
<feature type="chain" id="PRO_0000359933" description="Energy-coupling factor transporter transmembrane protein EcfT">
    <location>
        <begin position="1"/>
        <end position="265"/>
    </location>
</feature>
<feature type="transmembrane region" description="Helical" evidence="2">
    <location>
        <begin position="29"/>
        <end position="49"/>
    </location>
</feature>
<feature type="transmembrane region" description="Helical" evidence="2">
    <location>
        <begin position="50"/>
        <end position="70"/>
    </location>
</feature>
<feature type="transmembrane region" description="Helical" evidence="2">
    <location>
        <begin position="73"/>
        <end position="93"/>
    </location>
</feature>
<feature type="transmembrane region" description="Helical" evidence="2">
    <location>
        <begin position="107"/>
        <end position="127"/>
    </location>
</feature>
<feature type="transmembrane region" description="Helical" evidence="2">
    <location>
        <begin position="152"/>
        <end position="172"/>
    </location>
</feature>
<feature type="transmembrane region" description="Helical" evidence="2">
    <location>
        <begin position="243"/>
        <end position="263"/>
    </location>
</feature>
<comment type="function">
    <text evidence="1 3">Transmembrane (T) component of an energy-coupling factor (ECF) ABC-transporter complex. Unlike classic ABC transporters this ECF transporter provides the energy necessary to transport a number of different substrates (By similarity). Involved in riboflavin transport.</text>
</comment>
<comment type="subunit">
    <text evidence="1">Forms a stable energy-coupling factor (ECF) transporter complex composed of 2 membrane-embedded substrate-binding proteins (S component), 2 ATP-binding proteins (A component) and 2 transmembrane proteins (T component). May be able to interact with more than 1 S component at a time (By similarity).</text>
</comment>
<comment type="subcellular location">
    <subcellularLocation>
        <location evidence="4">Cell membrane</location>
        <topology evidence="4">Multi-pass membrane protein</topology>
    </subcellularLocation>
</comment>
<comment type="disruption phenotype">
    <text evidence="3">Abolishes riboflavin uptake, cell growth less inhibited by roseoflavin, a toxic riboflavin analog.</text>
</comment>
<comment type="similarity">
    <text evidence="4">Belongs to the energy-coupling factor EcfT family.</text>
</comment>
<dbReference type="EMBL" id="AL009126">
    <property type="protein sequence ID" value="CAB11923.2"/>
    <property type="molecule type" value="Genomic_DNA"/>
</dbReference>
<dbReference type="PIR" id="F69742">
    <property type="entry name" value="F69742"/>
</dbReference>
<dbReference type="RefSeq" id="NP_388028.2">
    <property type="nucleotide sequence ID" value="NC_000964.3"/>
</dbReference>
<dbReference type="RefSeq" id="WP_004399656.1">
    <property type="nucleotide sequence ID" value="NZ_OZ025638.1"/>
</dbReference>
<dbReference type="SMR" id="P70972"/>
<dbReference type="FunCoup" id="P70972">
    <property type="interactions" value="401"/>
</dbReference>
<dbReference type="STRING" id="224308.BSU01470"/>
<dbReference type="PaxDb" id="224308-BSU01470"/>
<dbReference type="EnsemblBacteria" id="CAB11923">
    <property type="protein sequence ID" value="CAB11923"/>
    <property type="gene ID" value="BSU_01470"/>
</dbReference>
<dbReference type="GeneID" id="938923"/>
<dbReference type="KEGG" id="bsu:BSU01470"/>
<dbReference type="PATRIC" id="fig|224308.179.peg.151"/>
<dbReference type="eggNOG" id="COG0619">
    <property type="taxonomic scope" value="Bacteria"/>
</dbReference>
<dbReference type="InParanoid" id="P70972"/>
<dbReference type="OrthoDB" id="8075495at2"/>
<dbReference type="PhylomeDB" id="P70972"/>
<dbReference type="BioCyc" id="BSUB:BSU01470-MONOMER"/>
<dbReference type="Proteomes" id="UP000001570">
    <property type="component" value="Chromosome"/>
</dbReference>
<dbReference type="GO" id="GO:0005886">
    <property type="term" value="C:plasma membrane"/>
    <property type="evidence" value="ECO:0000318"/>
    <property type="project" value="GO_Central"/>
</dbReference>
<dbReference type="GO" id="GO:0022857">
    <property type="term" value="F:transmembrane transporter activity"/>
    <property type="evidence" value="ECO:0007669"/>
    <property type="project" value="UniProtKB-UniRule"/>
</dbReference>
<dbReference type="CDD" id="cd16914">
    <property type="entry name" value="EcfT"/>
    <property type="match status" value="1"/>
</dbReference>
<dbReference type="HAMAP" id="MF_01461">
    <property type="entry name" value="EcfT"/>
    <property type="match status" value="1"/>
</dbReference>
<dbReference type="InterPro" id="IPR003339">
    <property type="entry name" value="ABC/ECF_trnsptr_transmembrane"/>
</dbReference>
<dbReference type="InterPro" id="IPR024919">
    <property type="entry name" value="EcfT"/>
</dbReference>
<dbReference type="PANTHER" id="PTHR33514">
    <property type="entry name" value="PROTEIN ABCI12, CHLOROPLASTIC"/>
    <property type="match status" value="1"/>
</dbReference>
<dbReference type="PANTHER" id="PTHR33514:SF13">
    <property type="entry name" value="PROTEIN ABCI12, CHLOROPLASTIC"/>
    <property type="match status" value="1"/>
</dbReference>
<dbReference type="Pfam" id="PF02361">
    <property type="entry name" value="CbiQ"/>
    <property type="match status" value="1"/>
</dbReference>
<accession>P70972</accession>
<name>ECFT_BACSU</name>
<keyword id="KW-1003">Cell membrane</keyword>
<keyword id="KW-0472">Membrane</keyword>
<keyword id="KW-1185">Reference proteome</keyword>
<keyword id="KW-0812">Transmembrane</keyword>
<keyword id="KW-1133">Transmembrane helix</keyword>
<keyword id="KW-0813">Transport</keyword>
<protein>
    <recommendedName>
        <fullName>Energy-coupling factor transporter transmembrane protein EcfT</fullName>
        <shortName>ECF transporter T component EcfT</shortName>
    </recommendedName>
</protein>
<evidence type="ECO:0000250" key="1"/>
<evidence type="ECO:0000255" key="2"/>
<evidence type="ECO:0000269" key="3">
    <source>
    </source>
</evidence>
<evidence type="ECO:0000305" key="4"/>
<gene>
    <name type="primary">ecfT</name>
    <name type="synonym">ybaF</name>
    <name type="ordered locus">BSU01470</name>
</gene>
<organism>
    <name type="scientific">Bacillus subtilis (strain 168)</name>
    <dbReference type="NCBI Taxonomy" id="224308"/>
    <lineage>
        <taxon>Bacteria</taxon>
        <taxon>Bacillati</taxon>
        <taxon>Bacillota</taxon>
        <taxon>Bacilli</taxon>
        <taxon>Bacillales</taxon>
        <taxon>Bacillaceae</taxon>
        <taxon>Bacillus</taxon>
    </lineage>
</organism>
<proteinExistence type="evidence at protein level"/>
<reference key="1">
    <citation type="journal article" date="1997" name="Nature">
        <title>The complete genome sequence of the Gram-positive bacterium Bacillus subtilis.</title>
        <authorList>
            <person name="Kunst F."/>
            <person name="Ogasawara N."/>
            <person name="Moszer I."/>
            <person name="Albertini A.M."/>
            <person name="Alloni G."/>
            <person name="Azevedo V."/>
            <person name="Bertero M.G."/>
            <person name="Bessieres P."/>
            <person name="Bolotin A."/>
            <person name="Borchert S."/>
            <person name="Borriss R."/>
            <person name="Boursier L."/>
            <person name="Brans A."/>
            <person name="Braun M."/>
            <person name="Brignell S.C."/>
            <person name="Bron S."/>
            <person name="Brouillet S."/>
            <person name="Bruschi C.V."/>
            <person name="Caldwell B."/>
            <person name="Capuano V."/>
            <person name="Carter N.M."/>
            <person name="Choi S.-K."/>
            <person name="Codani J.-J."/>
            <person name="Connerton I.F."/>
            <person name="Cummings N.J."/>
            <person name="Daniel R.A."/>
            <person name="Denizot F."/>
            <person name="Devine K.M."/>
            <person name="Duesterhoeft A."/>
            <person name="Ehrlich S.D."/>
            <person name="Emmerson P.T."/>
            <person name="Entian K.-D."/>
            <person name="Errington J."/>
            <person name="Fabret C."/>
            <person name="Ferrari E."/>
            <person name="Foulger D."/>
            <person name="Fritz C."/>
            <person name="Fujita M."/>
            <person name="Fujita Y."/>
            <person name="Fuma S."/>
            <person name="Galizzi A."/>
            <person name="Galleron N."/>
            <person name="Ghim S.-Y."/>
            <person name="Glaser P."/>
            <person name="Goffeau A."/>
            <person name="Golightly E.J."/>
            <person name="Grandi G."/>
            <person name="Guiseppi G."/>
            <person name="Guy B.J."/>
            <person name="Haga K."/>
            <person name="Haiech J."/>
            <person name="Harwood C.R."/>
            <person name="Henaut A."/>
            <person name="Hilbert H."/>
            <person name="Holsappel S."/>
            <person name="Hosono S."/>
            <person name="Hullo M.-F."/>
            <person name="Itaya M."/>
            <person name="Jones L.-M."/>
            <person name="Joris B."/>
            <person name="Karamata D."/>
            <person name="Kasahara Y."/>
            <person name="Klaerr-Blanchard M."/>
            <person name="Klein C."/>
            <person name="Kobayashi Y."/>
            <person name="Koetter P."/>
            <person name="Koningstein G."/>
            <person name="Krogh S."/>
            <person name="Kumano M."/>
            <person name="Kurita K."/>
            <person name="Lapidus A."/>
            <person name="Lardinois S."/>
            <person name="Lauber J."/>
            <person name="Lazarevic V."/>
            <person name="Lee S.-M."/>
            <person name="Levine A."/>
            <person name="Liu H."/>
            <person name="Masuda S."/>
            <person name="Mauel C."/>
            <person name="Medigue C."/>
            <person name="Medina N."/>
            <person name="Mellado R.P."/>
            <person name="Mizuno M."/>
            <person name="Moestl D."/>
            <person name="Nakai S."/>
            <person name="Noback M."/>
            <person name="Noone D."/>
            <person name="O'Reilly M."/>
            <person name="Ogawa K."/>
            <person name="Ogiwara A."/>
            <person name="Oudega B."/>
            <person name="Park S.-H."/>
            <person name="Parro V."/>
            <person name="Pohl T.M."/>
            <person name="Portetelle D."/>
            <person name="Porwollik S."/>
            <person name="Prescott A.M."/>
            <person name="Presecan E."/>
            <person name="Pujic P."/>
            <person name="Purnelle B."/>
            <person name="Rapoport G."/>
            <person name="Rey M."/>
            <person name="Reynolds S."/>
            <person name="Rieger M."/>
            <person name="Rivolta C."/>
            <person name="Rocha E."/>
            <person name="Roche B."/>
            <person name="Rose M."/>
            <person name="Sadaie Y."/>
            <person name="Sato T."/>
            <person name="Scanlan E."/>
            <person name="Schleich S."/>
            <person name="Schroeter R."/>
            <person name="Scoffone F."/>
            <person name="Sekiguchi J."/>
            <person name="Sekowska A."/>
            <person name="Seror S.J."/>
            <person name="Serror P."/>
            <person name="Shin B.-S."/>
            <person name="Soldo B."/>
            <person name="Sorokin A."/>
            <person name="Tacconi E."/>
            <person name="Takagi T."/>
            <person name="Takahashi H."/>
            <person name="Takemaru K."/>
            <person name="Takeuchi M."/>
            <person name="Tamakoshi A."/>
            <person name="Tanaka T."/>
            <person name="Terpstra P."/>
            <person name="Tognoni A."/>
            <person name="Tosato V."/>
            <person name="Uchiyama S."/>
            <person name="Vandenbol M."/>
            <person name="Vannier F."/>
            <person name="Vassarotti A."/>
            <person name="Viari A."/>
            <person name="Wambutt R."/>
            <person name="Wedler E."/>
            <person name="Wedler H."/>
            <person name="Weitzenegger T."/>
            <person name="Winters P."/>
            <person name="Wipat A."/>
            <person name="Yamamoto H."/>
            <person name="Yamane K."/>
            <person name="Yasumoto K."/>
            <person name="Yata K."/>
            <person name="Yoshida K."/>
            <person name="Yoshikawa H.-F."/>
            <person name="Zumstein E."/>
            <person name="Yoshikawa H."/>
            <person name="Danchin A."/>
        </authorList>
    </citation>
    <scope>NUCLEOTIDE SEQUENCE [LARGE SCALE GENOMIC DNA]</scope>
    <source>
        <strain>168</strain>
    </source>
</reference>
<reference key="2">
    <citation type="journal article" date="2009" name="Microbiology">
        <title>From a consortium sequence to a unified sequence: the Bacillus subtilis 168 reference genome a decade later.</title>
        <authorList>
            <person name="Barbe V."/>
            <person name="Cruveiller S."/>
            <person name="Kunst F."/>
            <person name="Lenoble P."/>
            <person name="Meurice G."/>
            <person name="Sekowska A."/>
            <person name="Vallenet D."/>
            <person name="Wang T."/>
            <person name="Moszer I."/>
            <person name="Medigue C."/>
            <person name="Danchin A."/>
        </authorList>
    </citation>
    <scope>SEQUENCE REVISION TO 101 AND 262</scope>
</reference>
<reference key="3">
    <citation type="journal article" date="2009" name="J. Bacteriol.">
        <title>A novel class of modular transporters for vitamins in prokaryotes.</title>
        <authorList>
            <person name="Rodionov D.A."/>
            <person name="Hebbeln P."/>
            <person name="Eudes A."/>
            <person name="ter Beek J."/>
            <person name="Rodionova I.A."/>
            <person name="Erkens G.B."/>
            <person name="Slotboom D.J."/>
            <person name="Gelfand M.S."/>
            <person name="Osterman A.L."/>
            <person name="Hanson A.D."/>
            <person name="Eitinger T."/>
        </authorList>
    </citation>
    <scope>FUNCTION</scope>
    <scope>SUBUNIT</scope>
    <scope>DISRUPTION PHENOTYPE</scope>
</reference>